<reference key="1">
    <citation type="journal article" date="2006" name="J. Bacteriol.">
        <title>Pathogenomic sequence analysis of Bacillus cereus and Bacillus thuringiensis isolates closely related to Bacillus anthracis.</title>
        <authorList>
            <person name="Han C.S."/>
            <person name="Xie G."/>
            <person name="Challacombe J.F."/>
            <person name="Altherr M.R."/>
            <person name="Bhotika S.S."/>
            <person name="Bruce D."/>
            <person name="Campbell C.S."/>
            <person name="Campbell M.L."/>
            <person name="Chen J."/>
            <person name="Chertkov O."/>
            <person name="Cleland C."/>
            <person name="Dimitrijevic M."/>
            <person name="Doggett N.A."/>
            <person name="Fawcett J.J."/>
            <person name="Glavina T."/>
            <person name="Goodwin L.A."/>
            <person name="Hill K.K."/>
            <person name="Hitchcock P."/>
            <person name="Jackson P.J."/>
            <person name="Keim P."/>
            <person name="Kewalramani A.R."/>
            <person name="Longmire J."/>
            <person name="Lucas S."/>
            <person name="Malfatti S."/>
            <person name="McMurry K."/>
            <person name="Meincke L.J."/>
            <person name="Misra M."/>
            <person name="Moseman B.L."/>
            <person name="Mundt M."/>
            <person name="Munk A.C."/>
            <person name="Okinaka R.T."/>
            <person name="Parson-Quintana B."/>
            <person name="Reilly L.P."/>
            <person name="Richardson P."/>
            <person name="Robinson D.L."/>
            <person name="Rubin E."/>
            <person name="Saunders E."/>
            <person name="Tapia R."/>
            <person name="Tesmer J.G."/>
            <person name="Thayer N."/>
            <person name="Thompson L.S."/>
            <person name="Tice H."/>
            <person name="Ticknor L.O."/>
            <person name="Wills P.L."/>
            <person name="Brettin T.S."/>
            <person name="Gilna P."/>
        </authorList>
    </citation>
    <scope>NUCLEOTIDE SEQUENCE [LARGE SCALE GENOMIC DNA]</scope>
    <source>
        <strain>97-27</strain>
    </source>
</reference>
<gene>
    <name type="ordered locus">BT9727_1775</name>
</gene>
<name>Y1775_BACHK</name>
<proteinExistence type="predicted"/>
<protein>
    <recommendedName>
        <fullName>Uncharacterized HTH-type transcriptional regulator BT9727_1775</fullName>
    </recommendedName>
</protein>
<feature type="chain" id="PRO_0000293595" description="Uncharacterized HTH-type transcriptional regulator BT9727_1775">
    <location>
        <begin position="1"/>
        <end position="147"/>
    </location>
</feature>
<feature type="domain" description="HTH marR-type" evidence="1">
    <location>
        <begin position="1"/>
        <end position="137"/>
    </location>
</feature>
<feature type="DNA-binding region" description="H-T-H motif" evidence="1">
    <location>
        <begin position="53"/>
        <end position="76"/>
    </location>
</feature>
<keyword id="KW-0238">DNA-binding</keyword>
<keyword id="KW-0804">Transcription</keyword>
<keyword id="KW-0805">Transcription regulation</keyword>
<accession>Q6HK19</accession>
<evidence type="ECO:0000255" key="1">
    <source>
        <dbReference type="PROSITE-ProRule" id="PRU00345"/>
    </source>
</evidence>
<dbReference type="EMBL" id="AE017355">
    <property type="protein sequence ID" value="AAT63373.1"/>
    <property type="molecule type" value="Genomic_DNA"/>
</dbReference>
<dbReference type="RefSeq" id="WP_001205523.1">
    <property type="nucleotide sequence ID" value="NC_005957.1"/>
</dbReference>
<dbReference type="RefSeq" id="YP_036107.1">
    <property type="nucleotide sequence ID" value="NC_005957.1"/>
</dbReference>
<dbReference type="SMR" id="Q6HK19"/>
<dbReference type="KEGG" id="btk:BT9727_1775"/>
<dbReference type="PATRIC" id="fig|281309.8.peg.1869"/>
<dbReference type="HOGENOM" id="CLU_083287_27_2_9"/>
<dbReference type="Proteomes" id="UP000001301">
    <property type="component" value="Chromosome"/>
</dbReference>
<dbReference type="GO" id="GO:0003677">
    <property type="term" value="F:DNA binding"/>
    <property type="evidence" value="ECO:0007669"/>
    <property type="project" value="UniProtKB-KW"/>
</dbReference>
<dbReference type="GO" id="GO:0003700">
    <property type="term" value="F:DNA-binding transcription factor activity"/>
    <property type="evidence" value="ECO:0007669"/>
    <property type="project" value="InterPro"/>
</dbReference>
<dbReference type="CDD" id="cd00090">
    <property type="entry name" value="HTH_ARSR"/>
    <property type="match status" value="1"/>
</dbReference>
<dbReference type="FunFam" id="1.10.10.10:FF:000281">
    <property type="entry name" value="MarR family transcriptional regulator"/>
    <property type="match status" value="1"/>
</dbReference>
<dbReference type="Gene3D" id="1.10.10.10">
    <property type="entry name" value="Winged helix-like DNA-binding domain superfamily/Winged helix DNA-binding domain"/>
    <property type="match status" value="1"/>
</dbReference>
<dbReference type="InterPro" id="IPR011991">
    <property type="entry name" value="ArsR-like_HTH"/>
</dbReference>
<dbReference type="InterPro" id="IPR000835">
    <property type="entry name" value="HTH_MarR-typ"/>
</dbReference>
<dbReference type="InterPro" id="IPR036388">
    <property type="entry name" value="WH-like_DNA-bd_sf"/>
</dbReference>
<dbReference type="InterPro" id="IPR036390">
    <property type="entry name" value="WH_DNA-bd_sf"/>
</dbReference>
<dbReference type="PANTHER" id="PTHR42756">
    <property type="entry name" value="TRANSCRIPTIONAL REGULATOR, MARR"/>
    <property type="match status" value="1"/>
</dbReference>
<dbReference type="PANTHER" id="PTHR42756:SF1">
    <property type="entry name" value="TRANSCRIPTIONAL REPRESSOR OF EMRAB OPERON"/>
    <property type="match status" value="1"/>
</dbReference>
<dbReference type="Pfam" id="PF01047">
    <property type="entry name" value="MarR"/>
    <property type="match status" value="1"/>
</dbReference>
<dbReference type="PRINTS" id="PR00598">
    <property type="entry name" value="HTHMARR"/>
</dbReference>
<dbReference type="SMART" id="SM00347">
    <property type="entry name" value="HTH_MARR"/>
    <property type="match status" value="1"/>
</dbReference>
<dbReference type="SUPFAM" id="SSF46785">
    <property type="entry name" value="Winged helix' DNA-binding domain"/>
    <property type="match status" value="1"/>
</dbReference>
<dbReference type="PROSITE" id="PS50995">
    <property type="entry name" value="HTH_MARR_2"/>
    <property type="match status" value="1"/>
</dbReference>
<sequence length="147" mass="17313">MRDNTIGSLIWLRLIRFTNQSNQMSNEFLKRFDLTTAQFDVLLQIRTYQPLTQMELAEKVTVTQGGISRMLTRLEKEGYIVRKQDWKTKTISLTEQGEAALERALPEQLAFQSSFFDDVLNEEEQKILYELMTKVHKHSEKKELPQE</sequence>
<organism>
    <name type="scientific">Bacillus thuringiensis subsp. konkukian (strain 97-27)</name>
    <dbReference type="NCBI Taxonomy" id="281309"/>
    <lineage>
        <taxon>Bacteria</taxon>
        <taxon>Bacillati</taxon>
        <taxon>Bacillota</taxon>
        <taxon>Bacilli</taxon>
        <taxon>Bacillales</taxon>
        <taxon>Bacillaceae</taxon>
        <taxon>Bacillus</taxon>
        <taxon>Bacillus cereus group</taxon>
    </lineage>
</organism>